<organism>
    <name type="scientific">Burkholderia cenocepacia (strain ATCC BAA-245 / DSM 16553 / LMG 16656 / NCTC 13227 / J2315 / CF5610)</name>
    <name type="common">Burkholderia cepacia (strain J2315)</name>
    <dbReference type="NCBI Taxonomy" id="216591"/>
    <lineage>
        <taxon>Bacteria</taxon>
        <taxon>Pseudomonadati</taxon>
        <taxon>Pseudomonadota</taxon>
        <taxon>Betaproteobacteria</taxon>
        <taxon>Burkholderiales</taxon>
        <taxon>Burkholderiaceae</taxon>
        <taxon>Burkholderia</taxon>
        <taxon>Burkholderia cepacia complex</taxon>
    </lineage>
</organism>
<name>ATPF_BURCJ</name>
<proteinExistence type="inferred from homology"/>
<sequence length="156" mass="17062">MNLNATLFAQMVVFLVLAWFTMKFVWPPLINALDERSKKIADGLAAAEKGKAELDAAHKRVDQELAQARNDGQQRIADAEKRAQAVAEEIKANAQAEAARIVAQAKAEAEQQIVKAREALRGEVAALAVKGAEQILKREVDQTAHAQLLNQLKAEL</sequence>
<comment type="function">
    <text evidence="1">F(1)F(0) ATP synthase produces ATP from ADP in the presence of a proton or sodium gradient. F-type ATPases consist of two structural domains, F(1) containing the extramembraneous catalytic core and F(0) containing the membrane proton channel, linked together by a central stalk and a peripheral stalk. During catalysis, ATP synthesis in the catalytic domain of F(1) is coupled via a rotary mechanism of the central stalk subunits to proton translocation.</text>
</comment>
<comment type="function">
    <text evidence="1">Component of the F(0) channel, it forms part of the peripheral stalk, linking F(1) to F(0).</text>
</comment>
<comment type="subunit">
    <text evidence="1">F-type ATPases have 2 components, F(1) - the catalytic core - and F(0) - the membrane proton channel. F(1) has five subunits: alpha(3), beta(3), gamma(1), delta(1), epsilon(1). F(0) has three main subunits: a(1), b(2) and c(10-14). The alpha and beta chains form an alternating ring which encloses part of the gamma chain. F(1) is attached to F(0) by a central stalk formed by the gamma and epsilon chains, while a peripheral stalk is formed by the delta and b chains.</text>
</comment>
<comment type="subcellular location">
    <subcellularLocation>
        <location evidence="1">Cell inner membrane</location>
        <topology evidence="1">Single-pass membrane protein</topology>
    </subcellularLocation>
</comment>
<comment type="similarity">
    <text evidence="1">Belongs to the ATPase B chain family.</text>
</comment>
<gene>
    <name evidence="1" type="primary">atpF</name>
    <name type="ordered locus">BceJ2315_00320</name>
    <name type="ORF">BCAL0032</name>
</gene>
<feature type="chain" id="PRO_0000368383" description="ATP synthase subunit b">
    <location>
        <begin position="1"/>
        <end position="156"/>
    </location>
</feature>
<feature type="transmembrane region" description="Helical" evidence="1">
    <location>
        <begin position="7"/>
        <end position="29"/>
    </location>
</feature>
<protein>
    <recommendedName>
        <fullName evidence="1">ATP synthase subunit b</fullName>
    </recommendedName>
    <alternativeName>
        <fullName evidence="1">ATP synthase F(0) sector subunit b</fullName>
    </alternativeName>
    <alternativeName>
        <fullName evidence="1">ATPase subunit I</fullName>
    </alternativeName>
    <alternativeName>
        <fullName evidence="1">F-type ATPase subunit b</fullName>
        <shortName evidence="1">F-ATPase subunit b</shortName>
    </alternativeName>
</protein>
<evidence type="ECO:0000255" key="1">
    <source>
        <dbReference type="HAMAP-Rule" id="MF_01398"/>
    </source>
</evidence>
<reference key="1">
    <citation type="journal article" date="2009" name="J. Bacteriol.">
        <title>The genome of Burkholderia cenocepacia J2315, an epidemic pathogen of cystic fibrosis patients.</title>
        <authorList>
            <person name="Holden M.T."/>
            <person name="Seth-Smith H.M."/>
            <person name="Crossman L.C."/>
            <person name="Sebaihia M."/>
            <person name="Bentley S.D."/>
            <person name="Cerdeno-Tarraga A.M."/>
            <person name="Thomson N.R."/>
            <person name="Bason N."/>
            <person name="Quail M.A."/>
            <person name="Sharp S."/>
            <person name="Cherevach I."/>
            <person name="Churcher C."/>
            <person name="Goodhead I."/>
            <person name="Hauser H."/>
            <person name="Holroyd N."/>
            <person name="Mungall K."/>
            <person name="Scott P."/>
            <person name="Walker D."/>
            <person name="White B."/>
            <person name="Rose H."/>
            <person name="Iversen P."/>
            <person name="Mil-Homens D."/>
            <person name="Rocha E.P."/>
            <person name="Fialho A.M."/>
            <person name="Baldwin A."/>
            <person name="Dowson C."/>
            <person name="Barrell B.G."/>
            <person name="Govan J.R."/>
            <person name="Vandamme P."/>
            <person name="Hart C.A."/>
            <person name="Mahenthiralingam E."/>
            <person name="Parkhill J."/>
        </authorList>
    </citation>
    <scope>NUCLEOTIDE SEQUENCE [LARGE SCALE GENOMIC DNA]</scope>
    <source>
        <strain>ATCC BAA-245 / DSM 16553 / LMG 16656 / NCTC 13227 / J2315 / CF5610</strain>
    </source>
</reference>
<dbReference type="EMBL" id="AM747720">
    <property type="protein sequence ID" value="CAR50338.1"/>
    <property type="molecule type" value="Genomic_DNA"/>
</dbReference>
<dbReference type="RefSeq" id="WP_006477283.1">
    <property type="nucleotide sequence ID" value="NC_011000.1"/>
</dbReference>
<dbReference type="SMR" id="B4EEY5"/>
<dbReference type="KEGG" id="bcj:BCAL0032"/>
<dbReference type="eggNOG" id="COG0711">
    <property type="taxonomic scope" value="Bacteria"/>
</dbReference>
<dbReference type="HOGENOM" id="CLU_079215_4_5_4"/>
<dbReference type="BioCyc" id="BCEN216591:G1G1V-35-MONOMER"/>
<dbReference type="Proteomes" id="UP000001035">
    <property type="component" value="Chromosome 1"/>
</dbReference>
<dbReference type="GO" id="GO:0005886">
    <property type="term" value="C:plasma membrane"/>
    <property type="evidence" value="ECO:0007669"/>
    <property type="project" value="UniProtKB-SubCell"/>
</dbReference>
<dbReference type="GO" id="GO:0045259">
    <property type="term" value="C:proton-transporting ATP synthase complex"/>
    <property type="evidence" value="ECO:0007669"/>
    <property type="project" value="UniProtKB-KW"/>
</dbReference>
<dbReference type="GO" id="GO:0046933">
    <property type="term" value="F:proton-transporting ATP synthase activity, rotational mechanism"/>
    <property type="evidence" value="ECO:0007669"/>
    <property type="project" value="UniProtKB-UniRule"/>
</dbReference>
<dbReference type="GO" id="GO:0046961">
    <property type="term" value="F:proton-transporting ATPase activity, rotational mechanism"/>
    <property type="evidence" value="ECO:0007669"/>
    <property type="project" value="TreeGrafter"/>
</dbReference>
<dbReference type="CDD" id="cd06503">
    <property type="entry name" value="ATP-synt_Fo_b"/>
    <property type="match status" value="1"/>
</dbReference>
<dbReference type="Gene3D" id="6.10.250.1580">
    <property type="match status" value="1"/>
</dbReference>
<dbReference type="HAMAP" id="MF_01398">
    <property type="entry name" value="ATP_synth_b_bprime"/>
    <property type="match status" value="1"/>
</dbReference>
<dbReference type="InterPro" id="IPR028987">
    <property type="entry name" value="ATP_synth_B-like_membr_sf"/>
</dbReference>
<dbReference type="InterPro" id="IPR002146">
    <property type="entry name" value="ATP_synth_b/b'su_bac/chlpt"/>
</dbReference>
<dbReference type="InterPro" id="IPR005864">
    <property type="entry name" value="ATP_synth_F0_bsu_bac"/>
</dbReference>
<dbReference type="InterPro" id="IPR050059">
    <property type="entry name" value="ATP_synthase_B_chain"/>
</dbReference>
<dbReference type="NCBIfam" id="TIGR01144">
    <property type="entry name" value="ATP_synt_b"/>
    <property type="match status" value="1"/>
</dbReference>
<dbReference type="NCBIfam" id="NF004411">
    <property type="entry name" value="PRK05759.1-2"/>
    <property type="match status" value="1"/>
</dbReference>
<dbReference type="PANTHER" id="PTHR33445:SF1">
    <property type="entry name" value="ATP SYNTHASE SUBUNIT B"/>
    <property type="match status" value="1"/>
</dbReference>
<dbReference type="PANTHER" id="PTHR33445">
    <property type="entry name" value="ATP SYNTHASE SUBUNIT B', CHLOROPLASTIC"/>
    <property type="match status" value="1"/>
</dbReference>
<dbReference type="Pfam" id="PF00430">
    <property type="entry name" value="ATP-synt_B"/>
    <property type="match status" value="1"/>
</dbReference>
<dbReference type="SUPFAM" id="SSF81573">
    <property type="entry name" value="F1F0 ATP synthase subunit B, membrane domain"/>
    <property type="match status" value="1"/>
</dbReference>
<accession>B4EEY5</accession>
<keyword id="KW-0066">ATP synthesis</keyword>
<keyword id="KW-0997">Cell inner membrane</keyword>
<keyword id="KW-1003">Cell membrane</keyword>
<keyword id="KW-0138">CF(0)</keyword>
<keyword id="KW-0375">Hydrogen ion transport</keyword>
<keyword id="KW-0406">Ion transport</keyword>
<keyword id="KW-0472">Membrane</keyword>
<keyword id="KW-0812">Transmembrane</keyword>
<keyword id="KW-1133">Transmembrane helix</keyword>
<keyword id="KW-0813">Transport</keyword>